<evidence type="ECO:0000255" key="1">
    <source>
        <dbReference type="HAMAP-Rule" id="MF_01694"/>
    </source>
</evidence>
<evidence type="ECO:0000255" key="2">
    <source>
        <dbReference type="PROSITE-ProRule" id="PRU01266"/>
    </source>
</evidence>
<evidence type="ECO:0000256" key="3">
    <source>
        <dbReference type="SAM" id="MobiDB-lite"/>
    </source>
</evidence>
<sequence length="357" mass="38553">MTTAETKPATETGENAGTTGTAGTAATPEILNLARTKVLENGEPLNYEETLQVLQLGDEHLDELLDLAHQVRLKWCGDAVEMEGIISLQTGGCPEDCHFCAQSGLFESPVRSIQLDIAQLIEAAKQTAKTGATEFCIVAAVKGPDEDLMNQMAKAIAAIQAEVDINIAASIGILTQEQVDRLKELGVHRYNHNLETCKSYFPEVVTTHTWEERTSTLEMVRDAGMEVCCGGIVGMGETVEQRAEFAIDLQNLDPTEVPLNFFDPRPGTPFADLEPMPVNDALRTIGAFRLALPRQLLRFAGGRELTLGDLGAEKGLLGGINAVIVGNYLTTLGRPAERDVDMLGKLQLPIKALNATL</sequence>
<keyword id="KW-0001">2Fe-2S</keyword>
<keyword id="KW-0004">4Fe-4S</keyword>
<keyword id="KW-0093">Biotin biosynthesis</keyword>
<keyword id="KW-0408">Iron</keyword>
<keyword id="KW-0411">Iron-sulfur</keyword>
<keyword id="KW-0479">Metal-binding</keyword>
<keyword id="KW-1185">Reference proteome</keyword>
<keyword id="KW-0949">S-adenosyl-L-methionine</keyword>
<keyword id="KW-0808">Transferase</keyword>
<comment type="function">
    <text evidence="1">Catalyzes the conversion of dethiobiotin (DTB) to biotin by the insertion of a sulfur atom into dethiobiotin via a radical-based mechanism.</text>
</comment>
<comment type="catalytic activity">
    <reaction evidence="1">
        <text>(4R,5S)-dethiobiotin + (sulfur carrier)-SH + 2 reduced [2Fe-2S]-[ferredoxin] + 2 S-adenosyl-L-methionine = (sulfur carrier)-H + biotin + 2 5'-deoxyadenosine + 2 L-methionine + 2 oxidized [2Fe-2S]-[ferredoxin]</text>
        <dbReference type="Rhea" id="RHEA:22060"/>
        <dbReference type="Rhea" id="RHEA-COMP:10000"/>
        <dbReference type="Rhea" id="RHEA-COMP:10001"/>
        <dbReference type="Rhea" id="RHEA-COMP:14737"/>
        <dbReference type="Rhea" id="RHEA-COMP:14739"/>
        <dbReference type="ChEBI" id="CHEBI:17319"/>
        <dbReference type="ChEBI" id="CHEBI:29917"/>
        <dbReference type="ChEBI" id="CHEBI:33737"/>
        <dbReference type="ChEBI" id="CHEBI:33738"/>
        <dbReference type="ChEBI" id="CHEBI:57586"/>
        <dbReference type="ChEBI" id="CHEBI:57844"/>
        <dbReference type="ChEBI" id="CHEBI:59789"/>
        <dbReference type="ChEBI" id="CHEBI:64428"/>
        <dbReference type="ChEBI" id="CHEBI:149473"/>
        <dbReference type="EC" id="2.8.1.6"/>
    </reaction>
</comment>
<comment type="cofactor">
    <cofactor evidence="1">
        <name>[4Fe-4S] cluster</name>
        <dbReference type="ChEBI" id="CHEBI:49883"/>
    </cofactor>
    <text evidence="1">Binds 1 [4Fe-4S] cluster. The cluster is coordinated with 3 cysteines and an exchangeable S-adenosyl-L-methionine.</text>
</comment>
<comment type="cofactor">
    <cofactor evidence="1">
        <name>[2Fe-2S] cluster</name>
        <dbReference type="ChEBI" id="CHEBI:190135"/>
    </cofactor>
    <text evidence="1">Binds 1 [2Fe-2S] cluster. The cluster is coordinated with 3 cysteines and 1 arginine.</text>
</comment>
<comment type="pathway">
    <text evidence="1">Cofactor biosynthesis; biotin biosynthesis; biotin from 7,8-diaminononanoate: step 2/2.</text>
</comment>
<comment type="subunit">
    <text evidence="1">Homodimer.</text>
</comment>
<comment type="similarity">
    <text evidence="1">Belongs to the radical SAM superfamily. Biotin synthase family.</text>
</comment>
<name>BIOB_CORJK</name>
<accession>Q4JWG3</accession>
<organism>
    <name type="scientific">Corynebacterium jeikeium (strain K411)</name>
    <dbReference type="NCBI Taxonomy" id="306537"/>
    <lineage>
        <taxon>Bacteria</taxon>
        <taxon>Bacillati</taxon>
        <taxon>Actinomycetota</taxon>
        <taxon>Actinomycetes</taxon>
        <taxon>Mycobacteriales</taxon>
        <taxon>Corynebacteriaceae</taxon>
        <taxon>Corynebacterium</taxon>
    </lineage>
</organism>
<dbReference type="EC" id="2.8.1.6" evidence="1"/>
<dbReference type="EMBL" id="CR931997">
    <property type="protein sequence ID" value="CAI36844.1"/>
    <property type="molecule type" value="Genomic_DNA"/>
</dbReference>
<dbReference type="RefSeq" id="WP_011273305.1">
    <property type="nucleotide sequence ID" value="NC_007164.1"/>
</dbReference>
<dbReference type="SMR" id="Q4JWG3"/>
<dbReference type="STRING" id="306537.jk0682"/>
<dbReference type="KEGG" id="cjk:jk0682"/>
<dbReference type="eggNOG" id="COG0502">
    <property type="taxonomic scope" value="Bacteria"/>
</dbReference>
<dbReference type="HOGENOM" id="CLU_033172_2_1_11"/>
<dbReference type="OrthoDB" id="9786826at2"/>
<dbReference type="UniPathway" id="UPA00078">
    <property type="reaction ID" value="UER00162"/>
</dbReference>
<dbReference type="Proteomes" id="UP000000545">
    <property type="component" value="Chromosome"/>
</dbReference>
<dbReference type="GO" id="GO:0051537">
    <property type="term" value="F:2 iron, 2 sulfur cluster binding"/>
    <property type="evidence" value="ECO:0007669"/>
    <property type="project" value="UniProtKB-KW"/>
</dbReference>
<dbReference type="GO" id="GO:0051539">
    <property type="term" value="F:4 iron, 4 sulfur cluster binding"/>
    <property type="evidence" value="ECO:0007669"/>
    <property type="project" value="UniProtKB-KW"/>
</dbReference>
<dbReference type="GO" id="GO:0004076">
    <property type="term" value="F:biotin synthase activity"/>
    <property type="evidence" value="ECO:0007669"/>
    <property type="project" value="UniProtKB-UniRule"/>
</dbReference>
<dbReference type="GO" id="GO:0005506">
    <property type="term" value="F:iron ion binding"/>
    <property type="evidence" value="ECO:0007669"/>
    <property type="project" value="UniProtKB-UniRule"/>
</dbReference>
<dbReference type="GO" id="GO:0009102">
    <property type="term" value="P:biotin biosynthetic process"/>
    <property type="evidence" value="ECO:0007669"/>
    <property type="project" value="UniProtKB-UniRule"/>
</dbReference>
<dbReference type="CDD" id="cd01335">
    <property type="entry name" value="Radical_SAM"/>
    <property type="match status" value="1"/>
</dbReference>
<dbReference type="FunFam" id="3.20.20.70:FF:000026">
    <property type="entry name" value="Biotin synthase"/>
    <property type="match status" value="1"/>
</dbReference>
<dbReference type="Gene3D" id="3.20.20.70">
    <property type="entry name" value="Aldolase class I"/>
    <property type="match status" value="1"/>
</dbReference>
<dbReference type="HAMAP" id="MF_01694">
    <property type="entry name" value="BioB"/>
    <property type="match status" value="1"/>
</dbReference>
<dbReference type="InterPro" id="IPR013785">
    <property type="entry name" value="Aldolase_TIM"/>
</dbReference>
<dbReference type="InterPro" id="IPR010722">
    <property type="entry name" value="BATS_dom"/>
</dbReference>
<dbReference type="InterPro" id="IPR002684">
    <property type="entry name" value="Biotin_synth/BioAB"/>
</dbReference>
<dbReference type="InterPro" id="IPR024177">
    <property type="entry name" value="Biotin_synthase"/>
</dbReference>
<dbReference type="InterPro" id="IPR006638">
    <property type="entry name" value="Elp3/MiaA/NifB-like_rSAM"/>
</dbReference>
<dbReference type="InterPro" id="IPR007197">
    <property type="entry name" value="rSAM"/>
</dbReference>
<dbReference type="NCBIfam" id="TIGR00433">
    <property type="entry name" value="bioB"/>
    <property type="match status" value="1"/>
</dbReference>
<dbReference type="PANTHER" id="PTHR22976">
    <property type="entry name" value="BIOTIN SYNTHASE"/>
    <property type="match status" value="1"/>
</dbReference>
<dbReference type="PANTHER" id="PTHR22976:SF2">
    <property type="entry name" value="BIOTIN SYNTHASE, MITOCHONDRIAL"/>
    <property type="match status" value="1"/>
</dbReference>
<dbReference type="Pfam" id="PF06968">
    <property type="entry name" value="BATS"/>
    <property type="match status" value="1"/>
</dbReference>
<dbReference type="Pfam" id="PF04055">
    <property type="entry name" value="Radical_SAM"/>
    <property type="match status" value="1"/>
</dbReference>
<dbReference type="PIRSF" id="PIRSF001619">
    <property type="entry name" value="Biotin_synth"/>
    <property type="match status" value="1"/>
</dbReference>
<dbReference type="SFLD" id="SFLDG01278">
    <property type="entry name" value="biotin_synthase_like"/>
    <property type="match status" value="1"/>
</dbReference>
<dbReference type="SFLD" id="SFLDS00029">
    <property type="entry name" value="Radical_SAM"/>
    <property type="match status" value="1"/>
</dbReference>
<dbReference type="SMART" id="SM00876">
    <property type="entry name" value="BATS"/>
    <property type="match status" value="1"/>
</dbReference>
<dbReference type="SMART" id="SM00729">
    <property type="entry name" value="Elp3"/>
    <property type="match status" value="1"/>
</dbReference>
<dbReference type="SUPFAM" id="SSF102114">
    <property type="entry name" value="Radical SAM enzymes"/>
    <property type="match status" value="1"/>
</dbReference>
<dbReference type="PROSITE" id="PS51918">
    <property type="entry name" value="RADICAL_SAM"/>
    <property type="match status" value="1"/>
</dbReference>
<feature type="chain" id="PRO_0000381329" description="Biotin synthase">
    <location>
        <begin position="1"/>
        <end position="357"/>
    </location>
</feature>
<feature type="domain" description="Radical SAM core" evidence="2">
    <location>
        <begin position="78"/>
        <end position="303"/>
    </location>
</feature>
<feature type="region of interest" description="Disordered" evidence="3">
    <location>
        <begin position="1"/>
        <end position="27"/>
    </location>
</feature>
<feature type="compositionally biased region" description="Low complexity" evidence="3">
    <location>
        <begin position="9"/>
        <end position="27"/>
    </location>
</feature>
<feature type="binding site" evidence="1">
    <location>
        <position position="93"/>
    </location>
    <ligand>
        <name>[4Fe-4S] cluster</name>
        <dbReference type="ChEBI" id="CHEBI:49883"/>
        <note>4Fe-4S-S-AdoMet</note>
    </ligand>
</feature>
<feature type="binding site" evidence="1">
    <location>
        <position position="97"/>
    </location>
    <ligand>
        <name>[4Fe-4S] cluster</name>
        <dbReference type="ChEBI" id="CHEBI:49883"/>
        <note>4Fe-4S-S-AdoMet</note>
    </ligand>
</feature>
<feature type="binding site" evidence="1">
    <location>
        <position position="100"/>
    </location>
    <ligand>
        <name>[4Fe-4S] cluster</name>
        <dbReference type="ChEBI" id="CHEBI:49883"/>
        <note>4Fe-4S-S-AdoMet</note>
    </ligand>
</feature>
<feature type="binding site" evidence="1">
    <location>
        <position position="136"/>
    </location>
    <ligand>
        <name>[2Fe-2S] cluster</name>
        <dbReference type="ChEBI" id="CHEBI:190135"/>
    </ligand>
</feature>
<feature type="binding site" evidence="1">
    <location>
        <position position="228"/>
    </location>
    <ligand>
        <name>[2Fe-2S] cluster</name>
        <dbReference type="ChEBI" id="CHEBI:190135"/>
    </ligand>
</feature>
<feature type="binding site" evidence="1">
    <location>
        <position position="298"/>
    </location>
    <ligand>
        <name>[2Fe-2S] cluster</name>
        <dbReference type="ChEBI" id="CHEBI:190135"/>
    </ligand>
</feature>
<reference key="1">
    <citation type="journal article" date="2005" name="J. Bacteriol.">
        <title>Complete genome sequence and analysis of the multiresistant nosocomial pathogen Corynebacterium jeikeium K411, a lipid-requiring bacterium of the human skin flora.</title>
        <authorList>
            <person name="Tauch A."/>
            <person name="Kaiser O."/>
            <person name="Hain T."/>
            <person name="Goesmann A."/>
            <person name="Weisshaar B."/>
            <person name="Albersmeier A."/>
            <person name="Bekel T."/>
            <person name="Bischoff N."/>
            <person name="Brune I."/>
            <person name="Chakraborty T."/>
            <person name="Kalinowski J."/>
            <person name="Meyer F."/>
            <person name="Rupp O."/>
            <person name="Schneiker S."/>
            <person name="Viehoever P."/>
            <person name="Puehler A."/>
        </authorList>
    </citation>
    <scope>NUCLEOTIDE SEQUENCE [LARGE SCALE GENOMIC DNA]</scope>
    <source>
        <strain>K411</strain>
    </source>
</reference>
<protein>
    <recommendedName>
        <fullName evidence="1">Biotin synthase</fullName>
        <ecNumber evidence="1">2.8.1.6</ecNumber>
    </recommendedName>
</protein>
<gene>
    <name evidence="1" type="primary">bioB</name>
    <name type="ordered locus">jk0682</name>
</gene>
<proteinExistence type="inferred from homology"/>